<evidence type="ECO:0000255" key="1">
    <source>
        <dbReference type="HAMAP-Rule" id="MF_00059"/>
    </source>
</evidence>
<gene>
    <name evidence="1" type="primary">rpoA</name>
    <name type="ordered locus">SSU98_0097</name>
</gene>
<name>RPOA_STRS2</name>
<protein>
    <recommendedName>
        <fullName evidence="1">DNA-directed RNA polymerase subunit alpha</fullName>
        <shortName evidence="1">RNAP subunit alpha</shortName>
        <ecNumber evidence="1">2.7.7.6</ecNumber>
    </recommendedName>
    <alternativeName>
        <fullName evidence="1">RNA polymerase subunit alpha</fullName>
    </alternativeName>
    <alternativeName>
        <fullName evidence="1">Transcriptase subunit alpha</fullName>
    </alternativeName>
</protein>
<organism>
    <name type="scientific">Streptococcus suis (strain 98HAH33)</name>
    <dbReference type="NCBI Taxonomy" id="391296"/>
    <lineage>
        <taxon>Bacteria</taxon>
        <taxon>Bacillati</taxon>
        <taxon>Bacillota</taxon>
        <taxon>Bacilli</taxon>
        <taxon>Lactobacillales</taxon>
        <taxon>Streptococcaceae</taxon>
        <taxon>Streptococcus</taxon>
    </lineage>
</organism>
<feature type="chain" id="PRO_0000296875" description="DNA-directed RNA polymerase subunit alpha">
    <location>
        <begin position="1"/>
        <end position="312"/>
    </location>
</feature>
<feature type="region of interest" description="Alpha N-terminal domain (alpha-NTD)" evidence="1">
    <location>
        <begin position="1"/>
        <end position="226"/>
    </location>
</feature>
<feature type="region of interest" description="Alpha C-terminal domain (alpha-CTD)" evidence="1">
    <location>
        <begin position="242"/>
        <end position="312"/>
    </location>
</feature>
<accession>A4VYR8</accession>
<proteinExistence type="inferred from homology"/>
<reference key="1">
    <citation type="journal article" date="2007" name="PLoS ONE">
        <title>A glimpse of streptococcal toxic shock syndrome from comparative genomics of S. suis 2 Chinese isolates.</title>
        <authorList>
            <person name="Chen C."/>
            <person name="Tang J."/>
            <person name="Dong W."/>
            <person name="Wang C."/>
            <person name="Feng Y."/>
            <person name="Wang J."/>
            <person name="Zheng F."/>
            <person name="Pan X."/>
            <person name="Liu D."/>
            <person name="Li M."/>
            <person name="Song Y."/>
            <person name="Zhu X."/>
            <person name="Sun H."/>
            <person name="Feng T."/>
            <person name="Guo Z."/>
            <person name="Ju A."/>
            <person name="Ge J."/>
            <person name="Dong Y."/>
            <person name="Sun W."/>
            <person name="Jiang Y."/>
            <person name="Wang J."/>
            <person name="Yan J."/>
            <person name="Yang H."/>
            <person name="Wang X."/>
            <person name="Gao G.F."/>
            <person name="Yang R."/>
            <person name="Wang J."/>
            <person name="Yu J."/>
        </authorList>
    </citation>
    <scope>NUCLEOTIDE SEQUENCE [LARGE SCALE GENOMIC DNA]</scope>
    <source>
        <strain>98HAH33</strain>
    </source>
</reference>
<comment type="function">
    <text evidence="1">DNA-dependent RNA polymerase catalyzes the transcription of DNA into RNA using the four ribonucleoside triphosphates as substrates.</text>
</comment>
<comment type="catalytic activity">
    <reaction evidence="1">
        <text>RNA(n) + a ribonucleoside 5'-triphosphate = RNA(n+1) + diphosphate</text>
        <dbReference type="Rhea" id="RHEA:21248"/>
        <dbReference type="Rhea" id="RHEA-COMP:14527"/>
        <dbReference type="Rhea" id="RHEA-COMP:17342"/>
        <dbReference type="ChEBI" id="CHEBI:33019"/>
        <dbReference type="ChEBI" id="CHEBI:61557"/>
        <dbReference type="ChEBI" id="CHEBI:140395"/>
        <dbReference type="EC" id="2.7.7.6"/>
    </reaction>
</comment>
<comment type="subunit">
    <text evidence="1">Homodimer. The RNAP catalytic core consists of 2 alpha, 1 beta, 1 beta' and 1 omega subunit. When a sigma factor is associated with the core the holoenzyme is formed, which can initiate transcription.</text>
</comment>
<comment type="domain">
    <text evidence="1">The N-terminal domain is essential for RNAP assembly and basal transcription, whereas the C-terminal domain is involved in interaction with transcriptional regulators and with upstream promoter elements.</text>
</comment>
<comment type="similarity">
    <text evidence="1">Belongs to the RNA polymerase alpha chain family.</text>
</comment>
<keyword id="KW-0240">DNA-directed RNA polymerase</keyword>
<keyword id="KW-0548">Nucleotidyltransferase</keyword>
<keyword id="KW-0804">Transcription</keyword>
<keyword id="KW-0808">Transferase</keyword>
<sequence length="312" mass="34285">MIEFEKPTITKIDENKDYGRFVIEPLERGYGTTLGNSLRRVLLASLPGAAVTSIKIDGVLHEFDTVPGVREDVMQIILNIKGIAVKSYVEDEKKIELDVVGPAEVTAGDILTDSDIEIVNPDHYLFTIADGATFKAVLTVNSGRGYVPAEDNKKDDAPVGTLAVDSIYTPVKKVNYQVEPARVGSNDGFDKLTLEINTNGTIIPEDALGLSARILMEHLGLFTDLTEVAKSAEVMKEAEVASDDRMLDRTIEELDLSVRSYNCLKRAGINTVFDLTEKTEPEMMKVRNLGRKSLEEVKVKLADLGLGLKKDK</sequence>
<dbReference type="EC" id="2.7.7.6" evidence="1"/>
<dbReference type="EMBL" id="CP000408">
    <property type="protein sequence ID" value="ABP91257.1"/>
    <property type="molecule type" value="Genomic_DNA"/>
</dbReference>
<dbReference type="SMR" id="A4VYR8"/>
<dbReference type="KEGG" id="ssv:SSU98_0097"/>
<dbReference type="HOGENOM" id="CLU_053084_0_1_9"/>
<dbReference type="GO" id="GO:0005737">
    <property type="term" value="C:cytoplasm"/>
    <property type="evidence" value="ECO:0007669"/>
    <property type="project" value="UniProtKB-ARBA"/>
</dbReference>
<dbReference type="GO" id="GO:0000428">
    <property type="term" value="C:DNA-directed RNA polymerase complex"/>
    <property type="evidence" value="ECO:0007669"/>
    <property type="project" value="UniProtKB-KW"/>
</dbReference>
<dbReference type="GO" id="GO:0003677">
    <property type="term" value="F:DNA binding"/>
    <property type="evidence" value="ECO:0007669"/>
    <property type="project" value="UniProtKB-UniRule"/>
</dbReference>
<dbReference type="GO" id="GO:0003899">
    <property type="term" value="F:DNA-directed RNA polymerase activity"/>
    <property type="evidence" value="ECO:0007669"/>
    <property type="project" value="UniProtKB-UniRule"/>
</dbReference>
<dbReference type="GO" id="GO:0046983">
    <property type="term" value="F:protein dimerization activity"/>
    <property type="evidence" value="ECO:0007669"/>
    <property type="project" value="InterPro"/>
</dbReference>
<dbReference type="GO" id="GO:0006351">
    <property type="term" value="P:DNA-templated transcription"/>
    <property type="evidence" value="ECO:0007669"/>
    <property type="project" value="UniProtKB-UniRule"/>
</dbReference>
<dbReference type="CDD" id="cd06928">
    <property type="entry name" value="RNAP_alpha_NTD"/>
    <property type="match status" value="1"/>
</dbReference>
<dbReference type="FunFam" id="1.10.150.20:FF:000001">
    <property type="entry name" value="DNA-directed RNA polymerase subunit alpha"/>
    <property type="match status" value="1"/>
</dbReference>
<dbReference type="FunFam" id="2.170.120.12:FF:000001">
    <property type="entry name" value="DNA-directed RNA polymerase subunit alpha"/>
    <property type="match status" value="1"/>
</dbReference>
<dbReference type="Gene3D" id="1.10.150.20">
    <property type="entry name" value="5' to 3' exonuclease, C-terminal subdomain"/>
    <property type="match status" value="1"/>
</dbReference>
<dbReference type="Gene3D" id="2.170.120.12">
    <property type="entry name" value="DNA-directed RNA polymerase, insert domain"/>
    <property type="match status" value="1"/>
</dbReference>
<dbReference type="Gene3D" id="3.30.1360.10">
    <property type="entry name" value="RNA polymerase, RBP11-like subunit"/>
    <property type="match status" value="1"/>
</dbReference>
<dbReference type="HAMAP" id="MF_00059">
    <property type="entry name" value="RNApol_bact_RpoA"/>
    <property type="match status" value="1"/>
</dbReference>
<dbReference type="InterPro" id="IPR011262">
    <property type="entry name" value="DNA-dir_RNA_pol_insert"/>
</dbReference>
<dbReference type="InterPro" id="IPR011263">
    <property type="entry name" value="DNA-dir_RNA_pol_RpoA/D/Rpb3"/>
</dbReference>
<dbReference type="InterPro" id="IPR011773">
    <property type="entry name" value="DNA-dir_RpoA"/>
</dbReference>
<dbReference type="InterPro" id="IPR036603">
    <property type="entry name" value="RBP11-like"/>
</dbReference>
<dbReference type="InterPro" id="IPR011260">
    <property type="entry name" value="RNAP_asu_C"/>
</dbReference>
<dbReference type="InterPro" id="IPR036643">
    <property type="entry name" value="RNApol_insert_sf"/>
</dbReference>
<dbReference type="NCBIfam" id="NF003513">
    <property type="entry name" value="PRK05182.1-2"/>
    <property type="match status" value="1"/>
</dbReference>
<dbReference type="NCBIfam" id="NF003515">
    <property type="entry name" value="PRK05182.2-1"/>
    <property type="match status" value="1"/>
</dbReference>
<dbReference type="NCBIfam" id="NF003518">
    <property type="entry name" value="PRK05182.2-4"/>
    <property type="match status" value="1"/>
</dbReference>
<dbReference type="NCBIfam" id="NF003519">
    <property type="entry name" value="PRK05182.2-5"/>
    <property type="match status" value="1"/>
</dbReference>
<dbReference type="NCBIfam" id="TIGR02027">
    <property type="entry name" value="rpoA"/>
    <property type="match status" value="1"/>
</dbReference>
<dbReference type="Pfam" id="PF01000">
    <property type="entry name" value="RNA_pol_A_bac"/>
    <property type="match status" value="1"/>
</dbReference>
<dbReference type="Pfam" id="PF03118">
    <property type="entry name" value="RNA_pol_A_CTD"/>
    <property type="match status" value="1"/>
</dbReference>
<dbReference type="Pfam" id="PF01193">
    <property type="entry name" value="RNA_pol_L"/>
    <property type="match status" value="1"/>
</dbReference>
<dbReference type="SMART" id="SM00662">
    <property type="entry name" value="RPOLD"/>
    <property type="match status" value="1"/>
</dbReference>
<dbReference type="SUPFAM" id="SSF47789">
    <property type="entry name" value="C-terminal domain of RNA polymerase alpha subunit"/>
    <property type="match status" value="1"/>
</dbReference>
<dbReference type="SUPFAM" id="SSF56553">
    <property type="entry name" value="Insert subdomain of RNA polymerase alpha subunit"/>
    <property type="match status" value="1"/>
</dbReference>
<dbReference type="SUPFAM" id="SSF55257">
    <property type="entry name" value="RBP11-like subunits of RNA polymerase"/>
    <property type="match status" value="1"/>
</dbReference>